<sequence length="178" mass="20640">MDLKNLTQEERSELSLIDVAHFILEQRKETILFPELVKEIQAFLGLKDAEIRERLVQFYTDMNIDGNFISLGNNTWGLRAWYPMDAIDEEVQTQTTPKKKRKSDDDEDEDEEILDDDVDYDDEEIVEELGEEEISLADVLLDEDEDDDDHLPDGIEGDLATVEDDYTDGDYTEDPEDK</sequence>
<organism>
    <name type="scientific">Listeria monocytogenes serovar 1/2a (strain ATCC BAA-679 / EGD-e)</name>
    <dbReference type="NCBI Taxonomy" id="169963"/>
    <lineage>
        <taxon>Bacteria</taxon>
        <taxon>Bacillati</taxon>
        <taxon>Bacillota</taxon>
        <taxon>Bacilli</taxon>
        <taxon>Bacillales</taxon>
        <taxon>Listeriaceae</taxon>
        <taxon>Listeria</taxon>
    </lineage>
</organism>
<protein>
    <recommendedName>
        <fullName evidence="1">Probable DNA-directed RNA polymerase subunit delta</fullName>
    </recommendedName>
    <alternativeName>
        <fullName evidence="1">RNAP delta factor</fullName>
    </alternativeName>
</protein>
<keyword id="KW-0240">DNA-directed RNA polymerase</keyword>
<keyword id="KW-0548">Nucleotidyltransferase</keyword>
<keyword id="KW-1185">Reference proteome</keyword>
<keyword id="KW-0804">Transcription</keyword>
<keyword id="KW-0808">Transferase</keyword>
<proteinExistence type="inferred from homology"/>
<dbReference type="EMBL" id="AL591983">
    <property type="protein sequence ID" value="CAD00638.1"/>
    <property type="molecule type" value="Genomic_DNA"/>
</dbReference>
<dbReference type="PIR" id="AH1394">
    <property type="entry name" value="AH1394"/>
</dbReference>
<dbReference type="RefSeq" id="NP_466083.1">
    <property type="nucleotide sequence ID" value="NC_003210.1"/>
</dbReference>
<dbReference type="RefSeq" id="WP_003723608.1">
    <property type="nucleotide sequence ID" value="NZ_CP149495.1"/>
</dbReference>
<dbReference type="SMR" id="Q8Y494"/>
<dbReference type="STRING" id="169963.gene:17595271"/>
<dbReference type="PaxDb" id="169963-lmo2560"/>
<dbReference type="EnsemblBacteria" id="CAD00638">
    <property type="protein sequence ID" value="CAD00638"/>
    <property type="gene ID" value="CAD00638"/>
</dbReference>
<dbReference type="GeneID" id="987250"/>
<dbReference type="KEGG" id="lmo:lmo2560"/>
<dbReference type="PATRIC" id="fig|169963.11.peg.2622"/>
<dbReference type="eggNOG" id="COG3343">
    <property type="taxonomic scope" value="Bacteria"/>
</dbReference>
<dbReference type="HOGENOM" id="CLU_116648_0_0_9"/>
<dbReference type="OrthoDB" id="401223at2"/>
<dbReference type="PhylomeDB" id="Q8Y494"/>
<dbReference type="BioCyc" id="LMON169963:LMO2560-MONOMER"/>
<dbReference type="Proteomes" id="UP000000817">
    <property type="component" value="Chromosome"/>
</dbReference>
<dbReference type="GO" id="GO:0000428">
    <property type="term" value="C:DNA-directed RNA polymerase complex"/>
    <property type="evidence" value="ECO:0007669"/>
    <property type="project" value="UniProtKB-KW"/>
</dbReference>
<dbReference type="GO" id="GO:0003899">
    <property type="term" value="F:DNA-directed RNA polymerase activity"/>
    <property type="evidence" value="ECO:0007669"/>
    <property type="project" value="UniProtKB-UniRule"/>
</dbReference>
<dbReference type="GO" id="GO:0006351">
    <property type="term" value="P:DNA-templated transcription"/>
    <property type="evidence" value="ECO:0007669"/>
    <property type="project" value="InterPro"/>
</dbReference>
<dbReference type="GO" id="GO:0006355">
    <property type="term" value="P:regulation of DNA-templated transcription"/>
    <property type="evidence" value="ECO:0007669"/>
    <property type="project" value="UniProtKB-UniRule"/>
</dbReference>
<dbReference type="Gene3D" id="1.10.10.1250">
    <property type="entry name" value="RNA polymerase, subunit delta, N-terminal domain"/>
    <property type="match status" value="1"/>
</dbReference>
<dbReference type="HAMAP" id="MF_00357">
    <property type="entry name" value="RNApol_bact_RpoE"/>
    <property type="match status" value="1"/>
</dbReference>
<dbReference type="InterPro" id="IPR007759">
    <property type="entry name" value="Asxl_HARE-HTH"/>
</dbReference>
<dbReference type="InterPro" id="IPR038087">
    <property type="entry name" value="RNAP_delta_N_dom_sf"/>
</dbReference>
<dbReference type="InterPro" id="IPR029757">
    <property type="entry name" value="RpoE"/>
</dbReference>
<dbReference type="NCBIfam" id="TIGR04567">
    <property type="entry name" value="RNAP_delt_lowGC"/>
    <property type="match status" value="1"/>
</dbReference>
<dbReference type="Pfam" id="PF05066">
    <property type="entry name" value="HARE-HTH"/>
    <property type="match status" value="1"/>
</dbReference>
<dbReference type="PROSITE" id="PS51913">
    <property type="entry name" value="HTH_HARE"/>
    <property type="match status" value="1"/>
</dbReference>
<name>RPOE_LISMO</name>
<gene>
    <name evidence="1" type="primary">rpoE</name>
    <name type="ordered locus">lmo2560</name>
</gene>
<evidence type="ECO:0000255" key="1">
    <source>
        <dbReference type="HAMAP-Rule" id="MF_00357"/>
    </source>
</evidence>
<evidence type="ECO:0000255" key="2">
    <source>
        <dbReference type="PROSITE-ProRule" id="PRU01261"/>
    </source>
</evidence>
<evidence type="ECO:0000256" key="3">
    <source>
        <dbReference type="SAM" id="MobiDB-lite"/>
    </source>
</evidence>
<reference key="1">
    <citation type="journal article" date="2001" name="Science">
        <title>Comparative genomics of Listeria species.</title>
        <authorList>
            <person name="Glaser P."/>
            <person name="Frangeul L."/>
            <person name="Buchrieser C."/>
            <person name="Rusniok C."/>
            <person name="Amend A."/>
            <person name="Baquero F."/>
            <person name="Berche P."/>
            <person name="Bloecker H."/>
            <person name="Brandt P."/>
            <person name="Chakraborty T."/>
            <person name="Charbit A."/>
            <person name="Chetouani F."/>
            <person name="Couve E."/>
            <person name="de Daruvar A."/>
            <person name="Dehoux P."/>
            <person name="Domann E."/>
            <person name="Dominguez-Bernal G."/>
            <person name="Duchaud E."/>
            <person name="Durant L."/>
            <person name="Dussurget O."/>
            <person name="Entian K.-D."/>
            <person name="Fsihi H."/>
            <person name="Garcia-del Portillo F."/>
            <person name="Garrido P."/>
            <person name="Gautier L."/>
            <person name="Goebel W."/>
            <person name="Gomez-Lopez N."/>
            <person name="Hain T."/>
            <person name="Hauf J."/>
            <person name="Jackson D."/>
            <person name="Jones L.-M."/>
            <person name="Kaerst U."/>
            <person name="Kreft J."/>
            <person name="Kuhn M."/>
            <person name="Kunst F."/>
            <person name="Kurapkat G."/>
            <person name="Madueno E."/>
            <person name="Maitournam A."/>
            <person name="Mata Vicente J."/>
            <person name="Ng E."/>
            <person name="Nedjari H."/>
            <person name="Nordsiek G."/>
            <person name="Novella S."/>
            <person name="de Pablos B."/>
            <person name="Perez-Diaz J.-C."/>
            <person name="Purcell R."/>
            <person name="Remmel B."/>
            <person name="Rose M."/>
            <person name="Schlueter T."/>
            <person name="Simoes N."/>
            <person name="Tierrez A."/>
            <person name="Vazquez-Boland J.-A."/>
            <person name="Voss H."/>
            <person name="Wehland J."/>
            <person name="Cossart P."/>
        </authorList>
    </citation>
    <scope>NUCLEOTIDE SEQUENCE [LARGE SCALE GENOMIC DNA]</scope>
    <source>
        <strain>ATCC BAA-679 / EGD-e</strain>
    </source>
</reference>
<feature type="chain" id="PRO_0000204317" description="Probable DNA-directed RNA polymerase subunit delta">
    <location>
        <begin position="1"/>
        <end position="178"/>
    </location>
</feature>
<feature type="domain" description="HTH HARE-type" evidence="2">
    <location>
        <begin position="14"/>
        <end position="81"/>
    </location>
</feature>
<feature type="region of interest" description="Disordered" evidence="3">
    <location>
        <begin position="88"/>
        <end position="122"/>
    </location>
</feature>
<feature type="region of interest" description="Disordered" evidence="3">
    <location>
        <begin position="141"/>
        <end position="178"/>
    </location>
</feature>
<feature type="compositionally biased region" description="Acidic residues" evidence="3">
    <location>
        <begin position="105"/>
        <end position="122"/>
    </location>
</feature>
<feature type="compositionally biased region" description="Acidic residues" evidence="3">
    <location>
        <begin position="141"/>
        <end position="150"/>
    </location>
</feature>
<feature type="compositionally biased region" description="Acidic residues" evidence="3">
    <location>
        <begin position="161"/>
        <end position="178"/>
    </location>
</feature>
<comment type="function">
    <text evidence="1">Participates in both the initiation and recycling phases of transcription. In the presence of the delta subunit, RNAP displays an increased specificity of transcription, a decreased affinity for nucleic acids, and an increased efficiency of RNA synthesis because of enhanced recycling.</text>
</comment>
<comment type="subunit">
    <text evidence="1">RNAP is composed of a core of 2 alpha, a beta and a beta' subunits. The core is associated with a delta subunit and one of several sigma factors.</text>
</comment>
<comment type="similarity">
    <text evidence="1">Belongs to the RpoE family.</text>
</comment>
<accession>Q8Y494</accession>